<dbReference type="EMBL" id="AK037021">
    <property type="protein sequence ID" value="BAC29673.1"/>
    <property type="molecule type" value="mRNA"/>
</dbReference>
<dbReference type="EMBL" id="BC052841">
    <property type="protein sequence ID" value="AAH52841.1"/>
    <property type="molecule type" value="mRNA"/>
</dbReference>
<dbReference type="CCDS" id="CCDS51426.1"/>
<dbReference type="RefSeq" id="NP_766580.3">
    <property type="nucleotide sequence ID" value="NM_172992.3"/>
</dbReference>
<dbReference type="BioGRID" id="213041">
    <property type="interactions" value="2"/>
</dbReference>
<dbReference type="FunCoup" id="Q8CB19">
    <property type="interactions" value="1720"/>
</dbReference>
<dbReference type="STRING" id="10090.ENSMUSP00000114087"/>
<dbReference type="GlyCosmos" id="Q8CB19">
    <property type="glycosylation" value="3 sites, No reported glycans"/>
</dbReference>
<dbReference type="GlyGen" id="Q8CB19">
    <property type="glycosylation" value="3 sites"/>
</dbReference>
<dbReference type="iPTMnet" id="Q8CB19"/>
<dbReference type="PhosphoSitePlus" id="Q8CB19"/>
<dbReference type="PaxDb" id="10090-ENSMUSP00000114087"/>
<dbReference type="ProteomicsDB" id="289555"/>
<dbReference type="DNASU" id="68770"/>
<dbReference type="GeneID" id="68770"/>
<dbReference type="KEGG" id="mmu:68770"/>
<dbReference type="UCSC" id="uc008wnz.2">
    <property type="organism name" value="mouse"/>
</dbReference>
<dbReference type="AGR" id="MGI:1916020"/>
<dbReference type="CTD" id="57157"/>
<dbReference type="MGI" id="MGI:1916020">
    <property type="gene designation" value="Phtf2"/>
</dbReference>
<dbReference type="eggNOG" id="ENOG502QQGQ">
    <property type="taxonomic scope" value="Eukaryota"/>
</dbReference>
<dbReference type="InParanoid" id="Q8CB19"/>
<dbReference type="OrthoDB" id="10066656at2759"/>
<dbReference type="PhylomeDB" id="Q8CB19"/>
<dbReference type="TreeFam" id="TF323570"/>
<dbReference type="BioGRID-ORCS" id="68770">
    <property type="hits" value="0 hits in 77 CRISPR screens"/>
</dbReference>
<dbReference type="ChiTaRS" id="Phtf2">
    <property type="organism name" value="mouse"/>
</dbReference>
<dbReference type="PRO" id="PR:Q8CB19"/>
<dbReference type="Proteomes" id="UP000000589">
    <property type="component" value="Unplaced"/>
</dbReference>
<dbReference type="RNAct" id="Q8CB19">
    <property type="molecule type" value="protein"/>
</dbReference>
<dbReference type="GO" id="GO:0005783">
    <property type="term" value="C:endoplasmic reticulum"/>
    <property type="evidence" value="ECO:0007669"/>
    <property type="project" value="InterPro"/>
</dbReference>
<dbReference type="GO" id="GO:0016020">
    <property type="term" value="C:membrane"/>
    <property type="evidence" value="ECO:0007669"/>
    <property type="project" value="UniProtKB-SubCell"/>
</dbReference>
<dbReference type="InterPro" id="IPR039775">
    <property type="entry name" value="PHTF1/2"/>
</dbReference>
<dbReference type="InterPro" id="IPR021980">
    <property type="entry name" value="PHTF1/2_N"/>
</dbReference>
<dbReference type="PANTHER" id="PTHR12680:SF2">
    <property type="entry name" value="PROTEIN PHTF2"/>
    <property type="match status" value="1"/>
</dbReference>
<dbReference type="PANTHER" id="PTHR12680">
    <property type="entry name" value="PUTATIVE HOMEODOMAIN TRANSCRIPTION FACTOR PHTF"/>
    <property type="match status" value="1"/>
</dbReference>
<dbReference type="Pfam" id="PF12129">
    <property type="entry name" value="PHTF1-2_N"/>
    <property type="match status" value="1"/>
</dbReference>
<reference key="1">
    <citation type="journal article" date="2005" name="Science">
        <title>The transcriptional landscape of the mammalian genome.</title>
        <authorList>
            <person name="Carninci P."/>
            <person name="Kasukawa T."/>
            <person name="Katayama S."/>
            <person name="Gough J."/>
            <person name="Frith M.C."/>
            <person name="Maeda N."/>
            <person name="Oyama R."/>
            <person name="Ravasi T."/>
            <person name="Lenhard B."/>
            <person name="Wells C."/>
            <person name="Kodzius R."/>
            <person name="Shimokawa K."/>
            <person name="Bajic V.B."/>
            <person name="Brenner S.E."/>
            <person name="Batalov S."/>
            <person name="Forrest A.R."/>
            <person name="Zavolan M."/>
            <person name="Davis M.J."/>
            <person name="Wilming L.G."/>
            <person name="Aidinis V."/>
            <person name="Allen J.E."/>
            <person name="Ambesi-Impiombato A."/>
            <person name="Apweiler R."/>
            <person name="Aturaliya R.N."/>
            <person name="Bailey T.L."/>
            <person name="Bansal M."/>
            <person name="Baxter L."/>
            <person name="Beisel K.W."/>
            <person name="Bersano T."/>
            <person name="Bono H."/>
            <person name="Chalk A.M."/>
            <person name="Chiu K.P."/>
            <person name="Choudhary V."/>
            <person name="Christoffels A."/>
            <person name="Clutterbuck D.R."/>
            <person name="Crowe M.L."/>
            <person name="Dalla E."/>
            <person name="Dalrymple B.P."/>
            <person name="de Bono B."/>
            <person name="Della Gatta G."/>
            <person name="di Bernardo D."/>
            <person name="Down T."/>
            <person name="Engstrom P."/>
            <person name="Fagiolini M."/>
            <person name="Faulkner G."/>
            <person name="Fletcher C.F."/>
            <person name="Fukushima T."/>
            <person name="Furuno M."/>
            <person name="Futaki S."/>
            <person name="Gariboldi M."/>
            <person name="Georgii-Hemming P."/>
            <person name="Gingeras T.R."/>
            <person name="Gojobori T."/>
            <person name="Green R.E."/>
            <person name="Gustincich S."/>
            <person name="Harbers M."/>
            <person name="Hayashi Y."/>
            <person name="Hensch T.K."/>
            <person name="Hirokawa N."/>
            <person name="Hill D."/>
            <person name="Huminiecki L."/>
            <person name="Iacono M."/>
            <person name="Ikeo K."/>
            <person name="Iwama A."/>
            <person name="Ishikawa T."/>
            <person name="Jakt M."/>
            <person name="Kanapin A."/>
            <person name="Katoh M."/>
            <person name="Kawasawa Y."/>
            <person name="Kelso J."/>
            <person name="Kitamura H."/>
            <person name="Kitano H."/>
            <person name="Kollias G."/>
            <person name="Krishnan S.P."/>
            <person name="Kruger A."/>
            <person name="Kummerfeld S.K."/>
            <person name="Kurochkin I.V."/>
            <person name="Lareau L.F."/>
            <person name="Lazarevic D."/>
            <person name="Lipovich L."/>
            <person name="Liu J."/>
            <person name="Liuni S."/>
            <person name="McWilliam S."/>
            <person name="Madan Babu M."/>
            <person name="Madera M."/>
            <person name="Marchionni L."/>
            <person name="Matsuda H."/>
            <person name="Matsuzawa S."/>
            <person name="Miki H."/>
            <person name="Mignone F."/>
            <person name="Miyake S."/>
            <person name="Morris K."/>
            <person name="Mottagui-Tabar S."/>
            <person name="Mulder N."/>
            <person name="Nakano N."/>
            <person name="Nakauchi H."/>
            <person name="Ng P."/>
            <person name="Nilsson R."/>
            <person name="Nishiguchi S."/>
            <person name="Nishikawa S."/>
            <person name="Nori F."/>
            <person name="Ohara O."/>
            <person name="Okazaki Y."/>
            <person name="Orlando V."/>
            <person name="Pang K.C."/>
            <person name="Pavan W.J."/>
            <person name="Pavesi G."/>
            <person name="Pesole G."/>
            <person name="Petrovsky N."/>
            <person name="Piazza S."/>
            <person name="Reed J."/>
            <person name="Reid J.F."/>
            <person name="Ring B.Z."/>
            <person name="Ringwald M."/>
            <person name="Rost B."/>
            <person name="Ruan Y."/>
            <person name="Salzberg S.L."/>
            <person name="Sandelin A."/>
            <person name="Schneider C."/>
            <person name="Schoenbach C."/>
            <person name="Sekiguchi K."/>
            <person name="Semple C.A."/>
            <person name="Seno S."/>
            <person name="Sessa L."/>
            <person name="Sheng Y."/>
            <person name="Shibata Y."/>
            <person name="Shimada H."/>
            <person name="Shimada K."/>
            <person name="Silva D."/>
            <person name="Sinclair B."/>
            <person name="Sperling S."/>
            <person name="Stupka E."/>
            <person name="Sugiura K."/>
            <person name="Sultana R."/>
            <person name="Takenaka Y."/>
            <person name="Taki K."/>
            <person name="Tammoja K."/>
            <person name="Tan S.L."/>
            <person name="Tang S."/>
            <person name="Taylor M.S."/>
            <person name="Tegner J."/>
            <person name="Teichmann S.A."/>
            <person name="Ueda H.R."/>
            <person name="van Nimwegen E."/>
            <person name="Verardo R."/>
            <person name="Wei C.L."/>
            <person name="Yagi K."/>
            <person name="Yamanishi H."/>
            <person name="Zabarovsky E."/>
            <person name="Zhu S."/>
            <person name="Zimmer A."/>
            <person name="Hide W."/>
            <person name="Bult C."/>
            <person name="Grimmond S.M."/>
            <person name="Teasdale R.D."/>
            <person name="Liu E.T."/>
            <person name="Brusic V."/>
            <person name="Quackenbush J."/>
            <person name="Wahlestedt C."/>
            <person name="Mattick J.S."/>
            <person name="Hume D.A."/>
            <person name="Kai C."/>
            <person name="Sasaki D."/>
            <person name="Tomaru Y."/>
            <person name="Fukuda S."/>
            <person name="Kanamori-Katayama M."/>
            <person name="Suzuki M."/>
            <person name="Aoki J."/>
            <person name="Arakawa T."/>
            <person name="Iida J."/>
            <person name="Imamura K."/>
            <person name="Itoh M."/>
            <person name="Kato T."/>
            <person name="Kawaji H."/>
            <person name="Kawagashira N."/>
            <person name="Kawashima T."/>
            <person name="Kojima M."/>
            <person name="Kondo S."/>
            <person name="Konno H."/>
            <person name="Nakano K."/>
            <person name="Ninomiya N."/>
            <person name="Nishio T."/>
            <person name="Okada M."/>
            <person name="Plessy C."/>
            <person name="Shibata K."/>
            <person name="Shiraki T."/>
            <person name="Suzuki S."/>
            <person name="Tagami M."/>
            <person name="Waki K."/>
            <person name="Watahiki A."/>
            <person name="Okamura-Oho Y."/>
            <person name="Suzuki H."/>
            <person name="Kawai J."/>
            <person name="Hayashizaki Y."/>
        </authorList>
    </citation>
    <scope>NUCLEOTIDE SEQUENCE [LARGE SCALE MRNA]</scope>
    <source>
        <strain>C57BL/6J</strain>
        <tissue>Vagina</tissue>
    </source>
</reference>
<reference key="2">
    <citation type="journal article" date="2004" name="Genome Res.">
        <title>The status, quality, and expansion of the NIH full-length cDNA project: the Mammalian Gene Collection (MGC).</title>
        <authorList>
            <consortium name="The MGC Project Team"/>
        </authorList>
    </citation>
    <scope>NUCLEOTIDE SEQUENCE [LARGE SCALE MRNA]</scope>
    <source>
        <strain>C57BL/6J</strain>
        <tissue>Egg</tissue>
    </source>
</reference>
<reference key="3">
    <citation type="journal article" date="2010" name="Cell">
        <title>A tissue-specific atlas of mouse protein phosphorylation and expression.</title>
        <authorList>
            <person name="Huttlin E.L."/>
            <person name="Jedrychowski M.P."/>
            <person name="Elias J.E."/>
            <person name="Goswami T."/>
            <person name="Rad R."/>
            <person name="Beausoleil S.A."/>
            <person name="Villen J."/>
            <person name="Haas W."/>
            <person name="Sowa M.E."/>
            <person name="Gygi S.P."/>
        </authorList>
    </citation>
    <scope>IDENTIFICATION BY MASS SPECTROMETRY [LARGE SCALE ANALYSIS]</scope>
    <source>
        <tissue>Heart</tissue>
    </source>
</reference>
<comment type="subcellular location">
    <subcellularLocation>
        <location evidence="1">Membrane</location>
        <topology evidence="1">Multi-pass membrane protein</topology>
    </subcellularLocation>
</comment>
<name>PHTF2_MOUSE</name>
<keyword id="KW-0325">Glycoprotein</keyword>
<keyword id="KW-0472">Membrane</keyword>
<keyword id="KW-1185">Reference proteome</keyword>
<keyword id="KW-0812">Transmembrane</keyword>
<keyword id="KW-1133">Transmembrane helix</keyword>
<protein>
    <recommendedName>
        <fullName evidence="3">Protein PHTF2</fullName>
    </recommendedName>
</protein>
<evidence type="ECO:0000255" key="1"/>
<evidence type="ECO:0000256" key="2">
    <source>
        <dbReference type="SAM" id="MobiDB-lite"/>
    </source>
</evidence>
<evidence type="ECO:0000305" key="3"/>
<accession>Q8CB19</accession>
<accession>Q7TPX6</accession>
<gene>
    <name type="primary">Phtf2</name>
</gene>
<feature type="chain" id="PRO_0000318510" description="Protein PHTF2">
    <location>
        <begin position="1"/>
        <end position="747"/>
    </location>
</feature>
<feature type="transmembrane region" description="Helical" evidence="1">
    <location>
        <begin position="98"/>
        <end position="118"/>
    </location>
</feature>
<feature type="transmembrane region" description="Helical" evidence="1">
    <location>
        <begin position="126"/>
        <end position="146"/>
    </location>
</feature>
<feature type="transmembrane region" description="Helical" evidence="1">
    <location>
        <begin position="459"/>
        <end position="479"/>
    </location>
</feature>
<feature type="transmembrane region" description="Helical" evidence="1">
    <location>
        <begin position="515"/>
        <end position="535"/>
    </location>
</feature>
<feature type="transmembrane region" description="Helical" evidence="1">
    <location>
        <begin position="596"/>
        <end position="616"/>
    </location>
</feature>
<feature type="transmembrane region" description="Helical" evidence="1">
    <location>
        <begin position="630"/>
        <end position="650"/>
    </location>
</feature>
<feature type="transmembrane region" description="Helical" evidence="1">
    <location>
        <begin position="722"/>
        <end position="742"/>
    </location>
</feature>
<feature type="domain" description="PHTF" evidence="1">
    <location>
        <begin position="6"/>
        <end position="153"/>
    </location>
</feature>
<feature type="region of interest" description="Disordered" evidence="2">
    <location>
        <begin position="170"/>
        <end position="192"/>
    </location>
</feature>
<feature type="region of interest" description="Disordered" evidence="2">
    <location>
        <begin position="268"/>
        <end position="365"/>
    </location>
</feature>
<feature type="compositionally biased region" description="Basic and acidic residues" evidence="2">
    <location>
        <begin position="172"/>
        <end position="181"/>
    </location>
</feature>
<feature type="compositionally biased region" description="Polar residues" evidence="2">
    <location>
        <begin position="182"/>
        <end position="192"/>
    </location>
</feature>
<feature type="compositionally biased region" description="Basic residues" evidence="2">
    <location>
        <begin position="321"/>
        <end position="331"/>
    </location>
</feature>
<feature type="compositionally biased region" description="Low complexity" evidence="2">
    <location>
        <begin position="340"/>
        <end position="352"/>
    </location>
</feature>
<feature type="compositionally biased region" description="Basic and acidic residues" evidence="2">
    <location>
        <begin position="353"/>
        <end position="362"/>
    </location>
</feature>
<feature type="glycosylation site" description="N-linked (GlcNAc...) asparagine" evidence="1">
    <location>
        <position position="291"/>
    </location>
</feature>
<feature type="glycosylation site" description="N-linked (GlcNAc...) asparagine" evidence="1">
    <location>
        <position position="659"/>
    </location>
</feature>
<feature type="glycosylation site" description="N-linked (GlcNAc...) asparagine" evidence="1">
    <location>
        <position position="718"/>
    </location>
</feature>
<feature type="sequence conflict" description="In Ref. 1; BAC29673." evidence="3" ref="1">
    <original>Y</original>
    <variation>H</variation>
    <location>
        <position position="197"/>
    </location>
</feature>
<feature type="sequence conflict" description="In Ref. 1; BAC29673." evidence="3" ref="1">
    <original>L</original>
    <variation>P</variation>
    <location>
        <position position="260"/>
    </location>
</feature>
<feature type="sequence conflict" description="In Ref. 1; BAC29673." evidence="3" ref="1">
    <original>G</original>
    <variation>D</variation>
    <location>
        <position position="366"/>
    </location>
</feature>
<feature type="sequence conflict" description="In Ref. 1; BAC29673." evidence="3" ref="1">
    <original>C</original>
    <variation>Y</variation>
    <location>
        <position position="628"/>
    </location>
</feature>
<sequence>MASRVTDAIVWYQKKIGAYDQQIWEKSVEQREIKGLRNKPKKTAHVKPDLIDVDLVRGSAFAKAKPESPWTSLTRKGIVRVVFFPFFSRWWLQVTSRVIFSWLLVLYLLQVAAIVLFCSAPSPHSIPLTEVIGPIWLMLLLGTVHCQIVSTRTPKPPLGTGGKRRRKLRKAAHLEVHREGDGSSTTDNTQEGAVQSYGAGAPYSVGTVFRDLWLAAFFLSGSKKAKNSIDKSTETDNGYVSLDGKRTVKSSEDGAQYHELQCETVGPEDAAWATRTPRSVPAKDTQRKITNVSDEVSSEEGPETGYPLRGHVDRTSESGLRNRKPHHYKKHYANEDAPKSGTSCSSRCSSSRQDSESTRPESETEGVLWEDLLHCAECRSSCTSETDVGNPQINPCGKKEYRDDPFHQSHLPWLHSSHPGLEKISAIVWEGNDCKKADMSVLEISGMIMNRVNNHVPGIGYQVFGNAISLILGLTPFVFRLSQATDLEQLTAHSASELYVIAFGSNEDVMVLSMVLISFVVRVSLVWIFFFLLCVAERTYKQRLLFAKLFGHLTSARRARKSEVPHFRLKKVQNIKMWLSLRSYLKRRGPQRSVDVIVSSAFLLTISVVFICCAQLLHVHEIFLDCHCNWELVIWCISLTLFLLRFVTLGSETSKKYSNTSILLTEQINLYLKMEKKPNKKEELTLVNNVLKLATKLLKELDSPFRLYGLTMNPLLYNITQVVILSAVSGVISDLLGFNLKLWKIKS</sequence>
<proteinExistence type="evidence at protein level"/>
<organism>
    <name type="scientific">Mus musculus</name>
    <name type="common">Mouse</name>
    <dbReference type="NCBI Taxonomy" id="10090"/>
    <lineage>
        <taxon>Eukaryota</taxon>
        <taxon>Metazoa</taxon>
        <taxon>Chordata</taxon>
        <taxon>Craniata</taxon>
        <taxon>Vertebrata</taxon>
        <taxon>Euteleostomi</taxon>
        <taxon>Mammalia</taxon>
        <taxon>Eutheria</taxon>
        <taxon>Euarchontoglires</taxon>
        <taxon>Glires</taxon>
        <taxon>Rodentia</taxon>
        <taxon>Myomorpha</taxon>
        <taxon>Muroidea</taxon>
        <taxon>Muridae</taxon>
        <taxon>Murinae</taxon>
        <taxon>Mus</taxon>
        <taxon>Mus</taxon>
    </lineage>
</organism>